<sequence length="122" mass="14401">MTCAQWLWKKIIALYEQAAECDGEVVRPKEPNWTAWANEIRLMCVQDGRTHKQICEMYSRVSRDPFWCRNVLSPSKLREKWDELSLRLSPSVSTYTEKREDPYFKASYDNVDYSQIPAGFRG</sequence>
<protein>
    <recommendedName>
        <fullName>Protein YfdO</fullName>
    </recommendedName>
</protein>
<proteinExistence type="inferred from homology"/>
<evidence type="ECO:0000269" key="1">
    <source>
    </source>
</evidence>
<evidence type="ECO:0000305" key="2"/>
<feature type="chain" id="PRO_0000169207" description="Protein YfdO">
    <location>
        <begin position="1"/>
        <end position="122"/>
    </location>
</feature>
<accession>P0AD35</accession>
<accession>A0A385XNB2</accession>
<accession>P76511</accession>
<accession>P76943</accession>
<organism>
    <name type="scientific">Escherichia coli (strain K12)</name>
    <dbReference type="NCBI Taxonomy" id="83333"/>
    <lineage>
        <taxon>Bacteria</taxon>
        <taxon>Pseudomonadati</taxon>
        <taxon>Pseudomonadota</taxon>
        <taxon>Gammaproteobacteria</taxon>
        <taxon>Enterobacterales</taxon>
        <taxon>Enterobacteriaceae</taxon>
        <taxon>Escherichia</taxon>
    </lineage>
</organism>
<name>YFDO_ECOLI</name>
<gene>
    <name type="primary">yfdO</name>
    <name type="synonym">oweS</name>
    <name type="ordered locus">b2358</name>
    <name type="ordered locus">JW2355</name>
</gene>
<keyword id="KW-1185">Reference proteome</keyword>
<comment type="disruption phenotype">
    <text evidence="1">Deletion of this gene, or the entire CPS-53 prophage, reduces viability under oxidative stress.</text>
</comment>
<comment type="miscellaneous">
    <text evidence="2">Encoded by the CPS-53 [KpLE1] prophage. Missing about 200 N-terminal amino acids compared to orthologs.</text>
</comment>
<comment type="similarity">
    <text evidence="2">Belongs to the phage O protein family.</text>
</comment>
<reference key="1">
    <citation type="journal article" date="1997" name="DNA Res.">
        <title>Construction of a contiguous 874-kb sequence of the Escherichia coli-K12 genome corresponding to 50.0-68.8 min on the linkage map and analysis of its sequence features.</title>
        <authorList>
            <person name="Yamamoto Y."/>
            <person name="Aiba H."/>
            <person name="Baba T."/>
            <person name="Hayashi K."/>
            <person name="Inada T."/>
            <person name="Isono K."/>
            <person name="Itoh T."/>
            <person name="Kimura S."/>
            <person name="Kitagawa M."/>
            <person name="Makino K."/>
            <person name="Miki T."/>
            <person name="Mitsuhashi N."/>
            <person name="Mizobuchi K."/>
            <person name="Mori H."/>
            <person name="Nakade S."/>
            <person name="Nakamura Y."/>
            <person name="Nashimoto H."/>
            <person name="Oshima T."/>
            <person name="Oyama S."/>
            <person name="Saito N."/>
            <person name="Sampei G."/>
            <person name="Satoh Y."/>
            <person name="Sivasundaram S."/>
            <person name="Tagami H."/>
            <person name="Takahashi H."/>
            <person name="Takeda J."/>
            <person name="Takemoto K."/>
            <person name="Uehara K."/>
            <person name="Wada C."/>
            <person name="Yamagata S."/>
            <person name="Horiuchi T."/>
        </authorList>
    </citation>
    <scope>NUCLEOTIDE SEQUENCE [LARGE SCALE GENOMIC DNA]</scope>
    <source>
        <strain>K12 / W3110 / ATCC 27325 / DSM 5911</strain>
    </source>
</reference>
<reference key="2">
    <citation type="journal article" date="1997" name="Science">
        <title>The complete genome sequence of Escherichia coli K-12.</title>
        <authorList>
            <person name="Blattner F.R."/>
            <person name="Plunkett G. III"/>
            <person name="Bloch C.A."/>
            <person name="Perna N.T."/>
            <person name="Burland V."/>
            <person name="Riley M."/>
            <person name="Collado-Vides J."/>
            <person name="Glasner J.D."/>
            <person name="Rode C.K."/>
            <person name="Mayhew G.F."/>
            <person name="Gregor J."/>
            <person name="Davis N.W."/>
            <person name="Kirkpatrick H.A."/>
            <person name="Goeden M.A."/>
            <person name="Rose D.J."/>
            <person name="Mau B."/>
            <person name="Shao Y."/>
        </authorList>
    </citation>
    <scope>NUCLEOTIDE SEQUENCE [LARGE SCALE GENOMIC DNA]</scope>
    <source>
        <strain>K12 / MG1655 / ATCC 47076</strain>
    </source>
</reference>
<reference key="3">
    <citation type="journal article" date="2006" name="Mol. Syst. Biol.">
        <title>Highly accurate genome sequences of Escherichia coli K-12 strains MG1655 and W3110.</title>
        <authorList>
            <person name="Hayashi K."/>
            <person name="Morooka N."/>
            <person name="Yamamoto Y."/>
            <person name="Fujita K."/>
            <person name="Isono K."/>
            <person name="Choi S."/>
            <person name="Ohtsubo E."/>
            <person name="Baba T."/>
            <person name="Wanner B.L."/>
            <person name="Mori H."/>
            <person name="Horiuchi T."/>
        </authorList>
    </citation>
    <scope>NUCLEOTIDE SEQUENCE [LARGE SCALE GENOMIC DNA]</scope>
    <source>
        <strain>K12 / W3110 / ATCC 27325 / DSM 5911</strain>
    </source>
</reference>
<reference key="4">
    <citation type="journal article" date="2010" name="Nat. Commun.">
        <title>Cryptic prophages help bacteria cope with adverse environments.</title>
        <authorList>
            <person name="Wang X."/>
            <person name="Kim Y."/>
            <person name="Ma Q."/>
            <person name="Hong S.H."/>
            <person name="Pokusaeva K."/>
            <person name="Sturino J.M."/>
            <person name="Wood T.K."/>
        </authorList>
    </citation>
    <scope>DISRUPTION PHENOTYPE</scope>
    <source>
        <strain>K12 / BW25113</strain>
    </source>
</reference>
<dbReference type="EMBL" id="U00096">
    <property type="protein sequence ID" value="AYC08232.1"/>
    <property type="molecule type" value="Genomic_DNA"/>
</dbReference>
<dbReference type="EMBL" id="AP009048">
    <property type="protein sequence ID" value="BAA16223.2"/>
    <property type="molecule type" value="Genomic_DNA"/>
</dbReference>
<dbReference type="PIR" id="C65009">
    <property type="entry name" value="C65009"/>
</dbReference>
<dbReference type="BioGRID" id="4261573">
    <property type="interactions" value="60"/>
</dbReference>
<dbReference type="FunCoup" id="P0AD35">
    <property type="interactions" value="304"/>
</dbReference>
<dbReference type="IntAct" id="P0AD35">
    <property type="interactions" value="2"/>
</dbReference>
<dbReference type="EnsemblBacteria" id="AYC08232">
    <property type="protein sequence ID" value="AYC08232"/>
    <property type="gene ID" value="b2358"/>
</dbReference>
<dbReference type="KEGG" id="ecj:JW2355"/>
<dbReference type="PATRIC" id="fig|83333.103.peg.3244"/>
<dbReference type="EchoBASE" id="EB3889"/>
<dbReference type="eggNOG" id="COG1846">
    <property type="taxonomic scope" value="Bacteria"/>
</dbReference>
<dbReference type="HOGENOM" id="CLU_146068_0_0_6"/>
<dbReference type="InParanoid" id="P0AD35"/>
<dbReference type="OMA" id="KNIMSPX"/>
<dbReference type="OrthoDB" id="5675294at2"/>
<dbReference type="BioCyc" id="EcoCyc:G7227-MONOMER"/>
<dbReference type="PRO" id="PR:P0AD35"/>
<dbReference type="Proteomes" id="UP000000625">
    <property type="component" value="Chromosome"/>
</dbReference>
<dbReference type="GO" id="GO:0006979">
    <property type="term" value="P:response to oxidative stress"/>
    <property type="evidence" value="ECO:0000315"/>
    <property type="project" value="EcoCyc"/>
</dbReference>